<protein>
    <recommendedName>
        <fullName evidence="2">D-alanine--D-alanine ligase</fullName>
        <ecNumber evidence="2">6.3.2.4</ecNumber>
    </recommendedName>
    <alternativeName>
        <fullName evidence="2">D-Ala-D-Ala ligase</fullName>
    </alternativeName>
    <alternativeName>
        <fullName evidence="2">D-alanylalanine synthetase</fullName>
    </alternativeName>
</protein>
<comment type="function">
    <text evidence="2">Cell wall formation.</text>
</comment>
<comment type="catalytic activity">
    <reaction evidence="2">
        <text>2 D-alanine + ATP = D-alanyl-D-alanine + ADP + phosphate + H(+)</text>
        <dbReference type="Rhea" id="RHEA:11224"/>
        <dbReference type="ChEBI" id="CHEBI:15378"/>
        <dbReference type="ChEBI" id="CHEBI:30616"/>
        <dbReference type="ChEBI" id="CHEBI:43474"/>
        <dbReference type="ChEBI" id="CHEBI:57416"/>
        <dbReference type="ChEBI" id="CHEBI:57822"/>
        <dbReference type="ChEBI" id="CHEBI:456216"/>
        <dbReference type="EC" id="6.3.2.4"/>
    </reaction>
</comment>
<comment type="cofactor">
    <cofactor evidence="1">
        <name>Mg(2+)</name>
        <dbReference type="ChEBI" id="CHEBI:18420"/>
    </cofactor>
    <cofactor evidence="1">
        <name>Mn(2+)</name>
        <dbReference type="ChEBI" id="CHEBI:29035"/>
    </cofactor>
    <text evidence="1">Binds 2 magnesium or manganese ions per subunit.</text>
</comment>
<comment type="pathway">
    <text evidence="2">Cell wall biogenesis; peptidoglycan biosynthesis.</text>
</comment>
<comment type="subcellular location">
    <subcellularLocation>
        <location evidence="2">Cytoplasm</location>
    </subcellularLocation>
</comment>
<comment type="similarity">
    <text evidence="2">Belongs to the D-alanine--D-alanine ligase family.</text>
</comment>
<reference key="1">
    <citation type="journal article" date="2008" name="Antimicrob. Agents Chemother.">
        <title>Mutated response regulator graR is responsible for phenotypic conversion of Staphylococcus aureus from heterogeneous vancomycin-intermediate resistance to vancomycin-intermediate resistance.</title>
        <authorList>
            <person name="Neoh H.-M."/>
            <person name="Cui L."/>
            <person name="Yuzawa H."/>
            <person name="Takeuchi F."/>
            <person name="Matsuo M."/>
            <person name="Hiramatsu K."/>
        </authorList>
    </citation>
    <scope>NUCLEOTIDE SEQUENCE [LARGE SCALE GENOMIC DNA]</scope>
    <source>
        <strain>Mu3 / ATCC 700698</strain>
    </source>
</reference>
<evidence type="ECO:0000250" key="1"/>
<evidence type="ECO:0000255" key="2">
    <source>
        <dbReference type="HAMAP-Rule" id="MF_00047"/>
    </source>
</evidence>
<proteinExistence type="inferred from homology"/>
<accession>A7X4R6</accession>
<sequence length="356" mass="40231">MTKENICIVFGGKSAEHEVSILTAQNVLNAIDKDKYHVDIIYITNDGDWRKQNNITAEIKSTDELHLENGEALEISQLLKESSSGQPYDAVFPLLHGPNGEDGTIQGLFEVLDVPYVGNGVLSAASSMDKLVMKQLFEHRGLPQLPYISFLRSEYEKYEHNILKLVNDKLNYPVFVKPANLGSSVGISKCNNEAELKEGIKEAFQFDRKLVIEQGVNAREIEVAVLGNDYPEATWPGEVVKDVAFYDYKSKYKDGKVQLQIPADLDEDVQLTLRNMALEAFKATDCSGLVRADFFVTEDNQIYINETNAMPGFTAFSMYPKLWENMGLSYPELITKLIELAKERHQDKQKNKYKID</sequence>
<keyword id="KW-0067">ATP-binding</keyword>
<keyword id="KW-0133">Cell shape</keyword>
<keyword id="KW-0961">Cell wall biogenesis/degradation</keyword>
<keyword id="KW-0963">Cytoplasm</keyword>
<keyword id="KW-0436">Ligase</keyword>
<keyword id="KW-0460">Magnesium</keyword>
<keyword id="KW-0464">Manganese</keyword>
<keyword id="KW-0479">Metal-binding</keyword>
<keyword id="KW-0547">Nucleotide-binding</keyword>
<keyword id="KW-0573">Peptidoglycan synthesis</keyword>
<dbReference type="EC" id="6.3.2.4" evidence="2"/>
<dbReference type="EMBL" id="AP009324">
    <property type="protein sequence ID" value="BAF78951.1"/>
    <property type="molecule type" value="Genomic_DNA"/>
</dbReference>
<dbReference type="RefSeq" id="WP_000159631.1">
    <property type="nucleotide sequence ID" value="NZ_CTYB01000037.1"/>
</dbReference>
<dbReference type="SMR" id="A7X4R6"/>
<dbReference type="KEGG" id="saw:SAHV_2068"/>
<dbReference type="HOGENOM" id="CLU_039268_0_0_9"/>
<dbReference type="UniPathway" id="UPA00219"/>
<dbReference type="GO" id="GO:0005829">
    <property type="term" value="C:cytosol"/>
    <property type="evidence" value="ECO:0007669"/>
    <property type="project" value="TreeGrafter"/>
</dbReference>
<dbReference type="GO" id="GO:0005524">
    <property type="term" value="F:ATP binding"/>
    <property type="evidence" value="ECO:0007669"/>
    <property type="project" value="UniProtKB-KW"/>
</dbReference>
<dbReference type="GO" id="GO:0008716">
    <property type="term" value="F:D-alanine-D-alanine ligase activity"/>
    <property type="evidence" value="ECO:0007669"/>
    <property type="project" value="UniProtKB-UniRule"/>
</dbReference>
<dbReference type="GO" id="GO:0046872">
    <property type="term" value="F:metal ion binding"/>
    <property type="evidence" value="ECO:0007669"/>
    <property type="project" value="UniProtKB-KW"/>
</dbReference>
<dbReference type="GO" id="GO:0071555">
    <property type="term" value="P:cell wall organization"/>
    <property type="evidence" value="ECO:0007669"/>
    <property type="project" value="UniProtKB-KW"/>
</dbReference>
<dbReference type="GO" id="GO:0009252">
    <property type="term" value="P:peptidoglycan biosynthetic process"/>
    <property type="evidence" value="ECO:0007669"/>
    <property type="project" value="UniProtKB-UniRule"/>
</dbReference>
<dbReference type="GO" id="GO:0008360">
    <property type="term" value="P:regulation of cell shape"/>
    <property type="evidence" value="ECO:0007669"/>
    <property type="project" value="UniProtKB-KW"/>
</dbReference>
<dbReference type="FunFam" id="3.30.1490.20:FF:000007">
    <property type="entry name" value="D-alanine--D-alanine ligase"/>
    <property type="match status" value="1"/>
</dbReference>
<dbReference type="FunFam" id="3.30.470.20:FF:000008">
    <property type="entry name" value="D-alanine--D-alanine ligase"/>
    <property type="match status" value="1"/>
</dbReference>
<dbReference type="FunFam" id="3.40.50.20:FF:000020">
    <property type="entry name" value="D-alanine--D-alanine ligase"/>
    <property type="match status" value="1"/>
</dbReference>
<dbReference type="Gene3D" id="3.40.50.20">
    <property type="match status" value="1"/>
</dbReference>
<dbReference type="Gene3D" id="3.30.1490.20">
    <property type="entry name" value="ATP-grasp fold, A domain"/>
    <property type="match status" value="1"/>
</dbReference>
<dbReference type="Gene3D" id="3.30.470.20">
    <property type="entry name" value="ATP-grasp fold, B domain"/>
    <property type="match status" value="1"/>
</dbReference>
<dbReference type="HAMAP" id="MF_00047">
    <property type="entry name" value="Dala_Dala_lig"/>
    <property type="match status" value="1"/>
</dbReference>
<dbReference type="InterPro" id="IPR011761">
    <property type="entry name" value="ATP-grasp"/>
</dbReference>
<dbReference type="InterPro" id="IPR013815">
    <property type="entry name" value="ATP_grasp_subdomain_1"/>
</dbReference>
<dbReference type="InterPro" id="IPR000291">
    <property type="entry name" value="D-Ala_lig_Van_CS"/>
</dbReference>
<dbReference type="InterPro" id="IPR005905">
    <property type="entry name" value="D_ala_D_ala"/>
</dbReference>
<dbReference type="InterPro" id="IPR011095">
    <property type="entry name" value="Dala_Dala_lig_C"/>
</dbReference>
<dbReference type="InterPro" id="IPR011127">
    <property type="entry name" value="Dala_Dala_lig_N"/>
</dbReference>
<dbReference type="InterPro" id="IPR016185">
    <property type="entry name" value="PreATP-grasp_dom_sf"/>
</dbReference>
<dbReference type="NCBIfam" id="TIGR01205">
    <property type="entry name" value="D_ala_D_alaTIGR"/>
    <property type="match status" value="1"/>
</dbReference>
<dbReference type="NCBIfam" id="NF002526">
    <property type="entry name" value="PRK01966.1-2"/>
    <property type="match status" value="1"/>
</dbReference>
<dbReference type="NCBIfam" id="NF002528">
    <property type="entry name" value="PRK01966.1-4"/>
    <property type="match status" value="1"/>
</dbReference>
<dbReference type="PANTHER" id="PTHR23132">
    <property type="entry name" value="D-ALANINE--D-ALANINE LIGASE"/>
    <property type="match status" value="1"/>
</dbReference>
<dbReference type="PANTHER" id="PTHR23132:SF25">
    <property type="entry name" value="D-ALANINE--D-ALANINE LIGASE A"/>
    <property type="match status" value="1"/>
</dbReference>
<dbReference type="Pfam" id="PF07478">
    <property type="entry name" value="Dala_Dala_lig_C"/>
    <property type="match status" value="1"/>
</dbReference>
<dbReference type="Pfam" id="PF01820">
    <property type="entry name" value="Dala_Dala_lig_N"/>
    <property type="match status" value="1"/>
</dbReference>
<dbReference type="PIRSF" id="PIRSF039102">
    <property type="entry name" value="Ddl/VanB"/>
    <property type="match status" value="1"/>
</dbReference>
<dbReference type="SUPFAM" id="SSF56059">
    <property type="entry name" value="Glutathione synthetase ATP-binding domain-like"/>
    <property type="match status" value="1"/>
</dbReference>
<dbReference type="SUPFAM" id="SSF52440">
    <property type="entry name" value="PreATP-grasp domain"/>
    <property type="match status" value="1"/>
</dbReference>
<dbReference type="PROSITE" id="PS50975">
    <property type="entry name" value="ATP_GRASP"/>
    <property type="match status" value="1"/>
</dbReference>
<dbReference type="PROSITE" id="PS00843">
    <property type="entry name" value="DALA_DALA_LIGASE_1"/>
    <property type="match status" value="1"/>
</dbReference>
<dbReference type="PROSITE" id="PS00844">
    <property type="entry name" value="DALA_DALA_LIGASE_2"/>
    <property type="match status" value="1"/>
</dbReference>
<gene>
    <name evidence="2" type="primary">ddl</name>
    <name type="ordered locus">SAHV_2068</name>
</gene>
<feature type="chain" id="PRO_1000030492" description="D-alanine--D-alanine ligase">
    <location>
        <begin position="1"/>
        <end position="356"/>
    </location>
</feature>
<feature type="domain" description="ATP-grasp" evidence="2">
    <location>
        <begin position="134"/>
        <end position="339"/>
    </location>
</feature>
<feature type="binding site" evidence="2">
    <location>
        <begin position="167"/>
        <end position="222"/>
    </location>
    <ligand>
        <name>ATP</name>
        <dbReference type="ChEBI" id="CHEBI:30616"/>
    </ligand>
</feature>
<feature type="binding site" evidence="2">
    <location>
        <position position="293"/>
    </location>
    <ligand>
        <name>Mg(2+)</name>
        <dbReference type="ChEBI" id="CHEBI:18420"/>
        <label>1</label>
    </ligand>
</feature>
<feature type="binding site" evidence="2">
    <location>
        <position position="306"/>
    </location>
    <ligand>
        <name>Mg(2+)</name>
        <dbReference type="ChEBI" id="CHEBI:18420"/>
        <label>1</label>
    </ligand>
</feature>
<feature type="binding site" evidence="2">
    <location>
        <position position="306"/>
    </location>
    <ligand>
        <name>Mg(2+)</name>
        <dbReference type="ChEBI" id="CHEBI:18420"/>
        <label>2</label>
    </ligand>
</feature>
<feature type="binding site" evidence="2">
    <location>
        <position position="308"/>
    </location>
    <ligand>
        <name>Mg(2+)</name>
        <dbReference type="ChEBI" id="CHEBI:18420"/>
        <label>2</label>
    </ligand>
</feature>
<organism>
    <name type="scientific">Staphylococcus aureus (strain Mu3 / ATCC 700698)</name>
    <dbReference type="NCBI Taxonomy" id="418127"/>
    <lineage>
        <taxon>Bacteria</taxon>
        <taxon>Bacillati</taxon>
        <taxon>Bacillota</taxon>
        <taxon>Bacilli</taxon>
        <taxon>Bacillales</taxon>
        <taxon>Staphylococcaceae</taxon>
        <taxon>Staphylococcus</taxon>
    </lineage>
</organism>
<name>DDL_STAA1</name>